<protein>
    <recommendedName>
        <fullName evidence="6">Acyl-CoA dehydrogenase FadE29</fullName>
        <shortName evidence="6">ACAD</shortName>
        <ecNumber evidence="4 5">1.3.99.-</ecNumber>
    </recommendedName>
    <alternativeName>
        <fullName evidence="10">3-oxo-23,24-bisnorchol-4-en-22-oyl-CoA dehydrogenase beta subunit</fullName>
    </alternativeName>
    <alternativeName>
        <fullName evidence="10">3-oxo-4-pregnene-20-carboxyl-CoA dehydrogenase beta subunit</fullName>
    </alternativeName>
</protein>
<evidence type="ECO:0000250" key="1">
    <source>
        <dbReference type="UniProtKB" id="I6YCA3"/>
    </source>
</evidence>
<evidence type="ECO:0000269" key="2">
    <source>
    </source>
</evidence>
<evidence type="ECO:0000269" key="3">
    <source>
    </source>
</evidence>
<evidence type="ECO:0000269" key="4">
    <source>
    </source>
</evidence>
<evidence type="ECO:0000269" key="5">
    <source>
    </source>
</evidence>
<evidence type="ECO:0000303" key="6">
    <source>
    </source>
</evidence>
<evidence type="ECO:0000305" key="7"/>
<evidence type="ECO:0000305" key="8">
    <source>
    </source>
</evidence>
<evidence type="ECO:0000305" key="9">
    <source>
    </source>
</evidence>
<evidence type="ECO:0000305" key="10">
    <source>
    </source>
</evidence>
<name>CHSE2_MYCTU</name>
<accession>P71858</accession>
<accession>F2GEQ3</accession>
<accession>I6X7L6</accession>
<accession>O08027</accession>
<organism>
    <name type="scientific">Mycobacterium tuberculosis (strain ATCC 25618 / H37Rv)</name>
    <dbReference type="NCBI Taxonomy" id="83332"/>
    <lineage>
        <taxon>Bacteria</taxon>
        <taxon>Bacillati</taxon>
        <taxon>Actinomycetota</taxon>
        <taxon>Actinomycetes</taxon>
        <taxon>Mycobacteriales</taxon>
        <taxon>Mycobacteriaceae</taxon>
        <taxon>Mycobacterium</taxon>
        <taxon>Mycobacterium tuberculosis complex</taxon>
    </lineage>
</organism>
<keyword id="KW-0153">Cholesterol metabolism</keyword>
<keyword id="KW-0274">FAD</keyword>
<keyword id="KW-0285">Flavoprotein</keyword>
<keyword id="KW-0442">Lipid degradation</keyword>
<keyword id="KW-0443">Lipid metabolism</keyword>
<keyword id="KW-0520">NAD</keyword>
<keyword id="KW-0521">NADP</keyword>
<keyword id="KW-0560">Oxidoreductase</keyword>
<keyword id="KW-1185">Reference proteome</keyword>
<keyword id="KW-0753">Steroid metabolism</keyword>
<keyword id="KW-1207">Sterol metabolism</keyword>
<keyword id="KW-0843">Virulence</keyword>
<dbReference type="EC" id="1.3.99.-" evidence="4 5"/>
<dbReference type="EMBL" id="AL123456">
    <property type="protein sequence ID" value="CCP46365.1"/>
    <property type="molecule type" value="Genomic_DNA"/>
</dbReference>
<dbReference type="RefSeq" id="NP_218060.1">
    <property type="nucleotide sequence ID" value="NC_000962.3"/>
</dbReference>
<dbReference type="RefSeq" id="WP_003419296.1">
    <property type="nucleotide sequence ID" value="NZ_NVQJ01000014.1"/>
</dbReference>
<dbReference type="SMR" id="P71858"/>
<dbReference type="FunCoup" id="P71858">
    <property type="interactions" value="1"/>
</dbReference>
<dbReference type="STRING" id="83332.Rv3543c"/>
<dbReference type="PaxDb" id="83332-Rv3543c"/>
<dbReference type="DNASU" id="888131"/>
<dbReference type="GeneID" id="45427527"/>
<dbReference type="GeneID" id="888131"/>
<dbReference type="KEGG" id="mtu:Rv3543c"/>
<dbReference type="KEGG" id="mtv:RVBD_3543c"/>
<dbReference type="PATRIC" id="fig|83332.111.peg.3948"/>
<dbReference type="TubercuList" id="Rv3543c"/>
<dbReference type="eggNOG" id="COG1960">
    <property type="taxonomic scope" value="Bacteria"/>
</dbReference>
<dbReference type="InParanoid" id="P71858"/>
<dbReference type="OrthoDB" id="2431337at2"/>
<dbReference type="PhylomeDB" id="P71858"/>
<dbReference type="BioCyc" id="MetaCyc:G185E-7820-MONOMER"/>
<dbReference type="UniPathway" id="UPA01058"/>
<dbReference type="Proteomes" id="UP000001584">
    <property type="component" value="Chromosome"/>
</dbReference>
<dbReference type="GO" id="GO:0071949">
    <property type="term" value="F:FAD binding"/>
    <property type="evidence" value="ECO:0000314"/>
    <property type="project" value="UniProtKB"/>
</dbReference>
<dbReference type="GO" id="GO:0016627">
    <property type="term" value="F:oxidoreductase activity, acting on the CH-CH group of donors"/>
    <property type="evidence" value="ECO:0007669"/>
    <property type="project" value="InterPro"/>
</dbReference>
<dbReference type="GO" id="GO:0051701">
    <property type="term" value="P:biological process involved in interaction with host"/>
    <property type="evidence" value="ECO:0000315"/>
    <property type="project" value="MTBBASE"/>
</dbReference>
<dbReference type="GO" id="GO:0006707">
    <property type="term" value="P:cholesterol catabolic process"/>
    <property type="evidence" value="ECO:0000303"/>
    <property type="project" value="UniProtKB"/>
</dbReference>
<dbReference type="GO" id="GO:0033539">
    <property type="term" value="P:fatty acid beta-oxidation using acyl-CoA dehydrogenase"/>
    <property type="evidence" value="ECO:0000314"/>
    <property type="project" value="UniProtKB"/>
</dbReference>
<dbReference type="FunFam" id="1.10.540.10:FF:000030">
    <property type="entry name" value="Acyl-CoA dehydrogenase FadE29"/>
    <property type="match status" value="1"/>
</dbReference>
<dbReference type="FunFam" id="1.20.140.10:FF:000036">
    <property type="entry name" value="Acyl-CoA dehydrogenase FadE29"/>
    <property type="match status" value="1"/>
</dbReference>
<dbReference type="FunFam" id="2.40.110.10:FF:000018">
    <property type="entry name" value="Acyl-CoA dehydrogenase fadE29"/>
    <property type="match status" value="1"/>
</dbReference>
<dbReference type="Gene3D" id="1.10.540.10">
    <property type="entry name" value="Acyl-CoA dehydrogenase/oxidase, N-terminal domain"/>
    <property type="match status" value="1"/>
</dbReference>
<dbReference type="Gene3D" id="2.40.110.10">
    <property type="entry name" value="Butyryl-CoA Dehydrogenase, subunit A, domain 2"/>
    <property type="match status" value="1"/>
</dbReference>
<dbReference type="Gene3D" id="1.20.140.10">
    <property type="entry name" value="Butyryl-CoA Dehydrogenase, subunit A, domain 3"/>
    <property type="match status" value="1"/>
</dbReference>
<dbReference type="InterPro" id="IPR006091">
    <property type="entry name" value="Acyl-CoA_Oxase/DH_mid-dom"/>
</dbReference>
<dbReference type="InterPro" id="IPR046373">
    <property type="entry name" value="Acyl-CoA_Oxase/DH_mid-dom_sf"/>
</dbReference>
<dbReference type="InterPro" id="IPR036250">
    <property type="entry name" value="AcylCo_DH-like_C"/>
</dbReference>
<dbReference type="InterPro" id="IPR009075">
    <property type="entry name" value="AcylCo_DH/oxidase_C"/>
</dbReference>
<dbReference type="InterPro" id="IPR013786">
    <property type="entry name" value="AcylCoA_DH/ox_N"/>
</dbReference>
<dbReference type="InterPro" id="IPR037069">
    <property type="entry name" value="AcylCoA_DH/ox_N_sf"/>
</dbReference>
<dbReference type="InterPro" id="IPR009100">
    <property type="entry name" value="AcylCoA_DH/oxidase_NM_dom_sf"/>
</dbReference>
<dbReference type="InterPro" id="IPR052161">
    <property type="entry name" value="Mycobact_Acyl-CoA_DH"/>
</dbReference>
<dbReference type="PANTHER" id="PTHR43292">
    <property type="entry name" value="ACYL-COA DEHYDROGENASE"/>
    <property type="match status" value="1"/>
</dbReference>
<dbReference type="PANTHER" id="PTHR43292:SF3">
    <property type="entry name" value="ACYL-COA DEHYDROGENASE FADE29"/>
    <property type="match status" value="1"/>
</dbReference>
<dbReference type="Pfam" id="PF00441">
    <property type="entry name" value="Acyl-CoA_dh_1"/>
    <property type="match status" value="1"/>
</dbReference>
<dbReference type="Pfam" id="PF02770">
    <property type="entry name" value="Acyl-CoA_dh_M"/>
    <property type="match status" value="1"/>
</dbReference>
<dbReference type="Pfam" id="PF02771">
    <property type="entry name" value="Acyl-CoA_dh_N"/>
    <property type="match status" value="1"/>
</dbReference>
<dbReference type="SUPFAM" id="SSF47203">
    <property type="entry name" value="Acyl-CoA dehydrogenase C-terminal domain-like"/>
    <property type="match status" value="1"/>
</dbReference>
<dbReference type="SUPFAM" id="SSF56645">
    <property type="entry name" value="Acyl-CoA dehydrogenase NM domain-like"/>
    <property type="match status" value="1"/>
</dbReference>
<feature type="chain" id="PRO_0000438518" description="Acyl-CoA dehydrogenase FadE29">
    <location>
        <begin position="1"/>
        <end position="387"/>
    </location>
</feature>
<feature type="active site" description="Proton acceptor" evidence="9">
    <location>
        <position position="241"/>
    </location>
</feature>
<feature type="binding site" evidence="1">
    <location>
        <begin position="123"/>
        <end position="126"/>
    </location>
    <ligand>
        <name>FAD</name>
        <dbReference type="ChEBI" id="CHEBI:57692"/>
    </ligand>
</feature>
<feature type="binding site" evidence="1">
    <location>
        <position position="132"/>
    </location>
    <ligand>
        <name>FAD</name>
        <dbReference type="ChEBI" id="CHEBI:57692"/>
    </ligand>
</feature>
<feature type="binding site" evidence="1">
    <location>
        <position position="158"/>
    </location>
    <ligand>
        <name>FAD</name>
        <dbReference type="ChEBI" id="CHEBI:57692"/>
    </ligand>
</feature>
<feature type="binding site" evidence="1">
    <location>
        <begin position="367"/>
        <end position="369"/>
    </location>
    <ligand>
        <name>FAD</name>
        <dbReference type="ChEBI" id="CHEBI:57692"/>
    </ligand>
</feature>
<feature type="mutagenesis site" description="Unable to dehydrogenate pregnene-carboxyl-CoA ester." evidence="4">
    <original>E</original>
    <variation>Q</variation>
    <location>
        <position position="241"/>
    </location>
</feature>
<sequence length="387" mass="42715">MFIDLTPEQRQLQAEIRQYFSNLISPDERTEMEKDRHGPAYRAVIRRMGRDGRLGVGWPKEFGGLGFGPIEQQIFVNEAHRADVPLPAVTLQTVGPTLQAHGSELQKKKFLPAILAGEAHFAIGYTEPEAGTDLASLRTTAVRDGDHYIVNGQKVFTTGAHDADYIWLACRTDPNAAKHKGISILIVDTKDPGYSWTPIILADGAHHTNATYYNDVRVPVDMLVGKENDGWRLITTQLNNERVMLGPAGRFASIYDRVHAWASVPGGNGVTPIDHDDVKRALGEIRAIWRINELLNWQVASAGEDINMADAAATKVFGTERVQRAGRLAEEIVGKYGNPAEPDTAELLRWLDAQTKRNLVITFGGGVNEVMREMIAASGLKVPRVPR</sequence>
<gene>
    <name type="primary">fadE29</name>
    <name type="ordered locus">Rv3543c</name>
</gene>
<comment type="function">
    <text evidence="3 4 5">Involved in the third cycle of side chain dehydrogenation in the beta-oxidation of cholesterol catabolism (PubMed:26161441). Contributes partly to the virulence by increasing the efficiency of beta-oxidation (PubMed:22045806, PubMed:23560677). Catalyzes the dehydrogenation of 2'-propanoyl-CoA ester side chains of 3-oxo-4-pregnene-20-carboxyl-CoA (3-OPC-CoA) to yield 3-oxo-4,17-pregnadiene-20-carboxyl-CoA (3-OPDC-CoA). Also able to dehydrogenate steroyl-CoA such as 3-oxo-chol-4-en-24-oyl-CoA (3-OCO-CoA), 1beta-(2'-propanoyl-CoA)-3a-alpha-H- 7a-beta-methylhexahydro-4-indanone (indanone-CoA ester), hexahydroindanone and pregenenone (PubMed:22045806, PubMed:23560677).</text>
</comment>
<comment type="catalytic activity">
    <reaction evidence="4 5">
        <text>3-oxochol-4-en-22-oyl-CoA + A = 3-oxochola-4,17-dien-22-oyl-CoA + AH2</text>
        <dbReference type="Rhea" id="RHEA:46324"/>
        <dbReference type="ChEBI" id="CHEBI:13193"/>
        <dbReference type="ChEBI" id="CHEBI:17499"/>
        <dbReference type="ChEBI" id="CHEBI:83792"/>
        <dbReference type="ChEBI" id="CHEBI:86020"/>
    </reaction>
</comment>
<comment type="cofactor">
    <cofactor evidence="4">
        <name>FAD</name>
        <dbReference type="ChEBI" id="CHEBI:57692"/>
    </cofactor>
    <text evidence="4">Binds 1 FAD per heterodimer.</text>
</comment>
<comment type="biophysicochemical properties">
    <kinetics>
        <KM evidence="4 5">5.3 uM for 3-OPC-CoA (at pH 8.5 and 25 degrees Celsius)</KM>
        <KM evidence="5">6.5 uM for 3-OCO-CoA (at pH 8.5 and 25 degrees Celsius)</KM>
        <KM evidence="4">86 uM for indanone-CoA ester (at pH 8.5 and 25 degrees Celsius)</KM>
        <text evidence="4 5">kcat is 78 min(-1) for 3-OPC-CoA as substrate (at pH 8.5 and 25 degrees Celsius) (PubMed:23560677). kcat is 5.1 min(-1) for indanone-CoA ester as substrate (at pH 8.5 and 25 degrees Celsius) (PubMed:23560677). kcat is 1.3 sec(-1) for 3-OPC-CoA as substrate (at pH 8.5 and 25 degrees Celsius) (PubMed:26161441). kcat is 0.16 sec(-1) for 3-OCO-CoA as substrate (at pH 8.5 and 25 degrees Celsius) (PubMed:26161441).</text>
    </kinetics>
</comment>
<comment type="pathway">
    <text evidence="8">Steroid metabolism; cholesterol degradation.</text>
</comment>
<comment type="subunit">
    <text evidence="3 4">Heterotetramer composed of FadE28 and FadE29.</text>
</comment>
<comment type="induction">
    <text evidence="2">Induced by cholesterol and repressed by KtsR.</text>
</comment>
<comment type="similarity">
    <text evidence="7">Belongs to the acyl-CoA dehydrogenase family.</text>
</comment>
<reference key="1">
    <citation type="journal article" date="1998" name="Nature">
        <title>Deciphering the biology of Mycobacterium tuberculosis from the complete genome sequence.</title>
        <authorList>
            <person name="Cole S.T."/>
            <person name="Brosch R."/>
            <person name="Parkhill J."/>
            <person name="Garnier T."/>
            <person name="Churcher C.M."/>
            <person name="Harris D.E."/>
            <person name="Gordon S.V."/>
            <person name="Eiglmeier K."/>
            <person name="Gas S."/>
            <person name="Barry C.E. III"/>
            <person name="Tekaia F."/>
            <person name="Badcock K."/>
            <person name="Basham D."/>
            <person name="Brown D."/>
            <person name="Chillingworth T."/>
            <person name="Connor R."/>
            <person name="Davies R.M."/>
            <person name="Devlin K."/>
            <person name="Feltwell T."/>
            <person name="Gentles S."/>
            <person name="Hamlin N."/>
            <person name="Holroyd S."/>
            <person name="Hornsby T."/>
            <person name="Jagels K."/>
            <person name="Krogh A."/>
            <person name="McLean J."/>
            <person name="Moule S."/>
            <person name="Murphy L.D."/>
            <person name="Oliver S."/>
            <person name="Osborne J."/>
            <person name="Quail M.A."/>
            <person name="Rajandream M.A."/>
            <person name="Rogers J."/>
            <person name="Rutter S."/>
            <person name="Seeger K."/>
            <person name="Skelton S."/>
            <person name="Squares S."/>
            <person name="Squares R."/>
            <person name="Sulston J.E."/>
            <person name="Taylor K."/>
            <person name="Whitehead S."/>
            <person name="Barrell B.G."/>
        </authorList>
    </citation>
    <scope>NUCLEOTIDE SEQUENCE [LARGE SCALE GENOMIC DNA]</scope>
    <source>
        <strain>ATCC 25618 / H37Rv</strain>
    </source>
</reference>
<reference key="2">
    <citation type="journal article" date="2007" name="Mol. Microbiol.">
        <title>A highly conserved transcriptional repressor controls a large regulon involved in lipid degradation in Mycobacterium smegmatis and Mycobacterium tuberculosis.</title>
        <authorList>
            <person name="Kendall S.L."/>
            <person name="Withers M."/>
            <person name="Soffair C.N."/>
            <person name="Moreland N.J."/>
            <person name="Gurcha S."/>
            <person name="Sidders B."/>
            <person name="Frita R."/>
            <person name="Ten Bokum A."/>
            <person name="Besra G.S."/>
            <person name="Lott J.S."/>
            <person name="Stoker N.G."/>
        </authorList>
    </citation>
    <scope>INDUCTION</scope>
</reference>
<reference key="3">
    <citation type="journal article" date="2011" name="J. Biol. Chem.">
        <title>Pathway profiling in Mycobacterium tuberculosis: elucidation of cholesterol-derived catabolite and enzymes that catalyze its metabolism.</title>
        <authorList>
            <person name="Thomas S.T."/>
            <person name="VanderVen B.C."/>
            <person name="Sherman D.R."/>
            <person name="Russell D.G."/>
            <person name="Sampson N.S."/>
        </authorList>
    </citation>
    <scope>FUNCTION</scope>
    <scope>SUBUNIT</scope>
    <scope>PATHWAY</scope>
    <scope>SUBSTRATE SPECIFICITY</scope>
    <source>
        <strain>ATCC 27294 / TMC 102 / H37Rv</strain>
    </source>
</reference>
<reference key="4">
    <citation type="journal article" date="2011" name="Mol. Cell. Proteomics">
        <title>Proteogenomic analysis of Mycobacterium tuberculosis by high resolution mass spectrometry.</title>
        <authorList>
            <person name="Kelkar D.S."/>
            <person name="Kumar D."/>
            <person name="Kumar P."/>
            <person name="Balakrishnan L."/>
            <person name="Muthusamy B."/>
            <person name="Yadav A.K."/>
            <person name="Shrivastava P."/>
            <person name="Marimuthu A."/>
            <person name="Anand S."/>
            <person name="Sundaram H."/>
            <person name="Kingsbury R."/>
            <person name="Harsha H.C."/>
            <person name="Nair B."/>
            <person name="Prasad T.S."/>
            <person name="Chauhan D.S."/>
            <person name="Katoch K."/>
            <person name="Katoch V.M."/>
            <person name="Kumar P."/>
            <person name="Chaerkady R."/>
            <person name="Ramachandran S."/>
            <person name="Dash D."/>
            <person name="Pandey A."/>
        </authorList>
    </citation>
    <scope>IDENTIFICATION BY MASS SPECTROMETRY [LARGE SCALE ANALYSIS]</scope>
    <source>
        <strain>ATCC 25618 / H37Rv</strain>
    </source>
</reference>
<reference key="5">
    <citation type="journal article" date="2013" name="Biochemistry">
        <title>Mycobacterium tuberculosis utilizes a unique heterotetrameric structure for dehydrogenation of the cholesterol side chain.</title>
        <authorList>
            <person name="Thomas S.T."/>
            <person name="Sampson N.S."/>
        </authorList>
    </citation>
    <scope>FUNCTION</scope>
    <scope>CATALYTIC ACTIVITY</scope>
    <scope>BIOPHYSICOCHEMICAL PROPERTIES</scope>
    <scope>MUTAGENESIS OF GLU-241</scope>
    <scope>COFACTOR</scope>
    <scope>SUBUNIT</scope>
    <scope>SUBSTRATE SPECIFICITY</scope>
    <scope>ACTIVE SITE</scope>
    <source>
        <strain>H37Rv</strain>
    </source>
</reference>
<reference key="6">
    <citation type="journal article" date="2015" name="ACS Infect. Dis.">
        <title>Unraveling cholesterol catabolism in Mycobacterium tuberculosis: ChsE4-ChsE5 alpha2beta2 acyl-CoA dehydrogenase initiates beta-oxidation of 3-oxo-cholest-4-en-26-oyl CoA.</title>
        <authorList>
            <person name="Yang M."/>
            <person name="Lu R."/>
            <person name="Guja K.E."/>
            <person name="Wipperman M.F."/>
            <person name="St Clair J.R."/>
            <person name="Bonds A.C."/>
            <person name="Garcia-Diaz M."/>
            <person name="Sampson N.S."/>
        </authorList>
    </citation>
    <scope>FUNCTION</scope>
    <scope>CATALYTIC ACTIVITY</scope>
    <scope>BIOPHYSICOCHEMICAL PROPERTIES</scope>
    <source>
        <strain>H37Rv</strain>
    </source>
</reference>
<proteinExistence type="evidence at protein level"/>